<sequence>MSEDRQGRSGDSNKILYCSFCGKSQHEVRKLIAGPSVFICDECVELCNDIIREELEEKAQSARSSLPKPREILEVLDQYVIGQLRAKRTLAVAVYNHYKRIESRSKNDEVELAKSNILLVGPTGSGKTLLAETLARLLNVPFTIADATTLTEAGYVGEDVENIIQKLLQKCDYDVEKAQQGIVYIDEIDKISRKSENPSITRDVSGEGVQQALLKLIEGTVASVPPQGGRKHPQQEFLQVDTKNILFICGGAFAGLDKVIQARSNDAGGIGFGAKVKSSERKQEVGKILAEVEPEDLIKFGLIPEFVGRLPVVATLEELDEPALIKILTEPKNAITKQFKKLFEMESVELEFRPDALSAIAKKALKRKTGARGLRTIVESVLLDTMYELPSQENVSKVVVDESVIEHKSEPYLIYQAQPAPAKAASGD</sequence>
<name>CLPX_XANCP</name>
<comment type="function">
    <text evidence="1">ATP-dependent specificity component of the Clp protease. It directs the protease to specific substrates. Can perform chaperone functions in the absence of ClpP.</text>
</comment>
<comment type="subunit">
    <text evidence="1">Component of the ClpX-ClpP complex. Forms a hexameric ring that, in the presence of ATP, binds to fourteen ClpP subunits assembled into a disk-like structure with a central cavity, resembling the structure of eukaryotic proteasomes.</text>
</comment>
<comment type="similarity">
    <text evidence="1">Belongs to the ClpX chaperone family.</text>
</comment>
<reference key="1">
    <citation type="journal article" date="2002" name="Nature">
        <title>Comparison of the genomes of two Xanthomonas pathogens with differing host specificities.</title>
        <authorList>
            <person name="da Silva A.C.R."/>
            <person name="Ferro J.A."/>
            <person name="Reinach F.C."/>
            <person name="Farah C.S."/>
            <person name="Furlan L.R."/>
            <person name="Quaggio R.B."/>
            <person name="Monteiro-Vitorello C.B."/>
            <person name="Van Sluys M.A."/>
            <person name="Almeida N.F. Jr."/>
            <person name="Alves L.M.C."/>
            <person name="do Amaral A.M."/>
            <person name="Bertolini M.C."/>
            <person name="Camargo L.E.A."/>
            <person name="Camarotte G."/>
            <person name="Cannavan F."/>
            <person name="Cardozo J."/>
            <person name="Chambergo F."/>
            <person name="Ciapina L.P."/>
            <person name="Cicarelli R.M.B."/>
            <person name="Coutinho L.L."/>
            <person name="Cursino-Santos J.R."/>
            <person name="El-Dorry H."/>
            <person name="Faria J.B."/>
            <person name="Ferreira A.J.S."/>
            <person name="Ferreira R.C.C."/>
            <person name="Ferro M.I.T."/>
            <person name="Formighieri E.F."/>
            <person name="Franco M.C."/>
            <person name="Greggio C.C."/>
            <person name="Gruber A."/>
            <person name="Katsuyama A.M."/>
            <person name="Kishi L.T."/>
            <person name="Leite R.P."/>
            <person name="Lemos E.G.M."/>
            <person name="Lemos M.V.F."/>
            <person name="Locali E.C."/>
            <person name="Machado M.A."/>
            <person name="Madeira A.M.B.N."/>
            <person name="Martinez-Rossi N.M."/>
            <person name="Martins E.C."/>
            <person name="Meidanis J."/>
            <person name="Menck C.F.M."/>
            <person name="Miyaki C.Y."/>
            <person name="Moon D.H."/>
            <person name="Moreira L.M."/>
            <person name="Novo M.T.M."/>
            <person name="Okura V.K."/>
            <person name="Oliveira M.C."/>
            <person name="Oliveira V.R."/>
            <person name="Pereira H.A."/>
            <person name="Rossi A."/>
            <person name="Sena J.A.D."/>
            <person name="Silva C."/>
            <person name="de Souza R.F."/>
            <person name="Spinola L.A.F."/>
            <person name="Takita M.A."/>
            <person name="Tamura R.E."/>
            <person name="Teixeira E.C."/>
            <person name="Tezza R.I.D."/>
            <person name="Trindade dos Santos M."/>
            <person name="Truffi D."/>
            <person name="Tsai S.M."/>
            <person name="White F.F."/>
            <person name="Setubal J.C."/>
            <person name="Kitajima J.P."/>
        </authorList>
    </citation>
    <scope>NUCLEOTIDE SEQUENCE [LARGE SCALE GENOMIC DNA]</scope>
    <source>
        <strain>ATCC 33913 / DSM 3586 / NCPPB 528 / LMG 568 / P 25</strain>
    </source>
</reference>
<evidence type="ECO:0000255" key="1">
    <source>
        <dbReference type="HAMAP-Rule" id="MF_00175"/>
    </source>
</evidence>
<evidence type="ECO:0000255" key="2">
    <source>
        <dbReference type="PROSITE-ProRule" id="PRU01250"/>
    </source>
</evidence>
<dbReference type="EMBL" id="AE008922">
    <property type="protein sequence ID" value="AAM40281.1"/>
    <property type="molecule type" value="Genomic_DNA"/>
</dbReference>
<dbReference type="RefSeq" id="NP_636357.1">
    <property type="nucleotide sequence ID" value="NC_003902.1"/>
</dbReference>
<dbReference type="RefSeq" id="WP_011036185.1">
    <property type="nucleotide sequence ID" value="NC_003902.1"/>
</dbReference>
<dbReference type="SMR" id="Q8PBY5"/>
<dbReference type="STRING" id="190485.XCC0976"/>
<dbReference type="EnsemblBacteria" id="AAM40281">
    <property type="protein sequence ID" value="AAM40281"/>
    <property type="gene ID" value="XCC0976"/>
</dbReference>
<dbReference type="KEGG" id="xcc:XCC0976"/>
<dbReference type="PATRIC" id="fig|190485.4.peg.1046"/>
<dbReference type="eggNOG" id="COG1219">
    <property type="taxonomic scope" value="Bacteria"/>
</dbReference>
<dbReference type="HOGENOM" id="CLU_014218_8_2_6"/>
<dbReference type="OrthoDB" id="9804062at2"/>
<dbReference type="PHI-base" id="PHI:9833"/>
<dbReference type="Proteomes" id="UP000001010">
    <property type="component" value="Chromosome"/>
</dbReference>
<dbReference type="GO" id="GO:0009376">
    <property type="term" value="C:HslUV protease complex"/>
    <property type="evidence" value="ECO:0000318"/>
    <property type="project" value="GO_Central"/>
</dbReference>
<dbReference type="GO" id="GO:0005524">
    <property type="term" value="F:ATP binding"/>
    <property type="evidence" value="ECO:0000318"/>
    <property type="project" value="GO_Central"/>
</dbReference>
<dbReference type="GO" id="GO:0016887">
    <property type="term" value="F:ATP hydrolysis activity"/>
    <property type="evidence" value="ECO:0000318"/>
    <property type="project" value="GO_Central"/>
</dbReference>
<dbReference type="GO" id="GO:0140662">
    <property type="term" value="F:ATP-dependent protein folding chaperone"/>
    <property type="evidence" value="ECO:0007669"/>
    <property type="project" value="InterPro"/>
</dbReference>
<dbReference type="GO" id="GO:0046983">
    <property type="term" value="F:protein dimerization activity"/>
    <property type="evidence" value="ECO:0007669"/>
    <property type="project" value="InterPro"/>
</dbReference>
<dbReference type="GO" id="GO:0051082">
    <property type="term" value="F:unfolded protein binding"/>
    <property type="evidence" value="ECO:0007669"/>
    <property type="project" value="UniProtKB-UniRule"/>
</dbReference>
<dbReference type="GO" id="GO:0008270">
    <property type="term" value="F:zinc ion binding"/>
    <property type="evidence" value="ECO:0007669"/>
    <property type="project" value="InterPro"/>
</dbReference>
<dbReference type="GO" id="GO:0051301">
    <property type="term" value="P:cell division"/>
    <property type="evidence" value="ECO:0000318"/>
    <property type="project" value="GO_Central"/>
</dbReference>
<dbReference type="GO" id="GO:0051603">
    <property type="term" value="P:proteolysis involved in protein catabolic process"/>
    <property type="evidence" value="ECO:0000318"/>
    <property type="project" value="GO_Central"/>
</dbReference>
<dbReference type="CDD" id="cd19497">
    <property type="entry name" value="RecA-like_ClpX"/>
    <property type="match status" value="1"/>
</dbReference>
<dbReference type="FunFam" id="1.10.8.60:FF:000002">
    <property type="entry name" value="ATP-dependent Clp protease ATP-binding subunit ClpX"/>
    <property type="match status" value="1"/>
</dbReference>
<dbReference type="FunFam" id="3.40.50.300:FF:000005">
    <property type="entry name" value="ATP-dependent Clp protease ATP-binding subunit ClpX"/>
    <property type="match status" value="1"/>
</dbReference>
<dbReference type="Gene3D" id="1.10.8.60">
    <property type="match status" value="1"/>
</dbReference>
<dbReference type="Gene3D" id="6.20.220.10">
    <property type="entry name" value="ClpX chaperone, C4-type zinc finger domain"/>
    <property type="match status" value="1"/>
</dbReference>
<dbReference type="Gene3D" id="3.40.50.300">
    <property type="entry name" value="P-loop containing nucleotide triphosphate hydrolases"/>
    <property type="match status" value="1"/>
</dbReference>
<dbReference type="HAMAP" id="MF_00175">
    <property type="entry name" value="ClpX"/>
    <property type="match status" value="1"/>
</dbReference>
<dbReference type="InterPro" id="IPR003593">
    <property type="entry name" value="AAA+_ATPase"/>
</dbReference>
<dbReference type="InterPro" id="IPR050052">
    <property type="entry name" value="ATP-dep_Clp_protease_ClpX"/>
</dbReference>
<dbReference type="InterPro" id="IPR003959">
    <property type="entry name" value="ATPase_AAA_core"/>
</dbReference>
<dbReference type="InterPro" id="IPR019489">
    <property type="entry name" value="Clp_ATPase_C"/>
</dbReference>
<dbReference type="InterPro" id="IPR004487">
    <property type="entry name" value="Clp_protease_ATP-bd_su_ClpX"/>
</dbReference>
<dbReference type="InterPro" id="IPR046425">
    <property type="entry name" value="ClpX_bact"/>
</dbReference>
<dbReference type="InterPro" id="IPR027417">
    <property type="entry name" value="P-loop_NTPase"/>
</dbReference>
<dbReference type="InterPro" id="IPR010603">
    <property type="entry name" value="Znf_CppX_C4"/>
</dbReference>
<dbReference type="InterPro" id="IPR038366">
    <property type="entry name" value="Znf_CppX_C4_sf"/>
</dbReference>
<dbReference type="NCBIfam" id="TIGR00382">
    <property type="entry name" value="clpX"/>
    <property type="match status" value="1"/>
</dbReference>
<dbReference type="NCBIfam" id="NF003745">
    <property type="entry name" value="PRK05342.1"/>
    <property type="match status" value="1"/>
</dbReference>
<dbReference type="PANTHER" id="PTHR48102:SF7">
    <property type="entry name" value="ATP-DEPENDENT CLP PROTEASE ATP-BINDING SUBUNIT CLPX-LIKE, MITOCHONDRIAL"/>
    <property type="match status" value="1"/>
</dbReference>
<dbReference type="PANTHER" id="PTHR48102">
    <property type="entry name" value="ATP-DEPENDENT CLP PROTEASE ATP-BINDING SUBUNIT CLPX-LIKE, MITOCHONDRIAL-RELATED"/>
    <property type="match status" value="1"/>
</dbReference>
<dbReference type="Pfam" id="PF07724">
    <property type="entry name" value="AAA_2"/>
    <property type="match status" value="1"/>
</dbReference>
<dbReference type="Pfam" id="PF10431">
    <property type="entry name" value="ClpB_D2-small"/>
    <property type="match status" value="1"/>
</dbReference>
<dbReference type="Pfam" id="PF06689">
    <property type="entry name" value="zf-C4_ClpX"/>
    <property type="match status" value="1"/>
</dbReference>
<dbReference type="SMART" id="SM00382">
    <property type="entry name" value="AAA"/>
    <property type="match status" value="1"/>
</dbReference>
<dbReference type="SMART" id="SM01086">
    <property type="entry name" value="ClpB_D2-small"/>
    <property type="match status" value="1"/>
</dbReference>
<dbReference type="SMART" id="SM00994">
    <property type="entry name" value="zf-C4_ClpX"/>
    <property type="match status" value="1"/>
</dbReference>
<dbReference type="SUPFAM" id="SSF57716">
    <property type="entry name" value="Glucocorticoid receptor-like (DNA-binding domain)"/>
    <property type="match status" value="1"/>
</dbReference>
<dbReference type="SUPFAM" id="SSF52540">
    <property type="entry name" value="P-loop containing nucleoside triphosphate hydrolases"/>
    <property type="match status" value="1"/>
</dbReference>
<dbReference type="PROSITE" id="PS51902">
    <property type="entry name" value="CLPX_ZB"/>
    <property type="match status" value="1"/>
</dbReference>
<feature type="chain" id="PRO_0000160460" description="ATP-dependent Clp protease ATP-binding subunit ClpX">
    <location>
        <begin position="1"/>
        <end position="428"/>
    </location>
</feature>
<feature type="domain" description="ClpX-type ZB" evidence="2">
    <location>
        <begin position="6"/>
        <end position="59"/>
    </location>
</feature>
<feature type="binding site" evidence="2">
    <location>
        <position position="18"/>
    </location>
    <ligand>
        <name>Zn(2+)</name>
        <dbReference type="ChEBI" id="CHEBI:29105"/>
    </ligand>
</feature>
<feature type="binding site" evidence="2">
    <location>
        <position position="21"/>
    </location>
    <ligand>
        <name>Zn(2+)</name>
        <dbReference type="ChEBI" id="CHEBI:29105"/>
    </ligand>
</feature>
<feature type="binding site" evidence="2">
    <location>
        <position position="40"/>
    </location>
    <ligand>
        <name>Zn(2+)</name>
        <dbReference type="ChEBI" id="CHEBI:29105"/>
    </ligand>
</feature>
<feature type="binding site" evidence="2">
    <location>
        <position position="43"/>
    </location>
    <ligand>
        <name>Zn(2+)</name>
        <dbReference type="ChEBI" id="CHEBI:29105"/>
    </ligand>
</feature>
<feature type="binding site" evidence="1">
    <location>
        <begin position="122"/>
        <end position="129"/>
    </location>
    <ligand>
        <name>ATP</name>
        <dbReference type="ChEBI" id="CHEBI:30616"/>
    </ligand>
</feature>
<organism>
    <name type="scientific">Xanthomonas campestris pv. campestris (strain ATCC 33913 / DSM 3586 / NCPPB 528 / LMG 568 / P 25)</name>
    <dbReference type="NCBI Taxonomy" id="190485"/>
    <lineage>
        <taxon>Bacteria</taxon>
        <taxon>Pseudomonadati</taxon>
        <taxon>Pseudomonadota</taxon>
        <taxon>Gammaproteobacteria</taxon>
        <taxon>Lysobacterales</taxon>
        <taxon>Lysobacteraceae</taxon>
        <taxon>Xanthomonas</taxon>
    </lineage>
</organism>
<gene>
    <name evidence="1" type="primary">clpX</name>
    <name type="ordered locus">XCC0976</name>
</gene>
<proteinExistence type="inferred from homology"/>
<protein>
    <recommendedName>
        <fullName evidence="1">ATP-dependent Clp protease ATP-binding subunit ClpX</fullName>
    </recommendedName>
</protein>
<keyword id="KW-0067">ATP-binding</keyword>
<keyword id="KW-0143">Chaperone</keyword>
<keyword id="KW-0479">Metal-binding</keyword>
<keyword id="KW-0547">Nucleotide-binding</keyword>
<keyword id="KW-1185">Reference proteome</keyword>
<keyword id="KW-0862">Zinc</keyword>
<accession>Q8PBY5</accession>